<name>RLMG_YERPP</name>
<dbReference type="EC" id="2.1.1.174" evidence="1"/>
<dbReference type="EMBL" id="CP000668">
    <property type="protein sequence ID" value="ABP38790.1"/>
    <property type="molecule type" value="Genomic_DNA"/>
</dbReference>
<dbReference type="RefSeq" id="WP_011906152.1">
    <property type="nucleotide sequence ID" value="NZ_CP009715.1"/>
</dbReference>
<dbReference type="SMR" id="A4THM8"/>
<dbReference type="KEGG" id="ypp:YPDSF_0375"/>
<dbReference type="PATRIC" id="fig|386656.14.peg.1678"/>
<dbReference type="GO" id="GO:0005737">
    <property type="term" value="C:cytoplasm"/>
    <property type="evidence" value="ECO:0007669"/>
    <property type="project" value="UniProtKB-SubCell"/>
</dbReference>
<dbReference type="GO" id="GO:0052916">
    <property type="term" value="F:23S rRNA (guanine(1835)-N(2))-methyltransferase activity"/>
    <property type="evidence" value="ECO:0007669"/>
    <property type="project" value="UniProtKB-EC"/>
</dbReference>
<dbReference type="GO" id="GO:0003676">
    <property type="term" value="F:nucleic acid binding"/>
    <property type="evidence" value="ECO:0007669"/>
    <property type="project" value="InterPro"/>
</dbReference>
<dbReference type="CDD" id="cd02440">
    <property type="entry name" value="AdoMet_MTases"/>
    <property type="match status" value="1"/>
</dbReference>
<dbReference type="Gene3D" id="3.40.50.150">
    <property type="entry name" value="Vaccinia Virus protein VP39"/>
    <property type="match status" value="2"/>
</dbReference>
<dbReference type="HAMAP" id="MF_01859">
    <property type="entry name" value="23SrRNA_methyltr_G"/>
    <property type="match status" value="1"/>
</dbReference>
<dbReference type="InterPro" id="IPR002052">
    <property type="entry name" value="DNA_methylase_N6_adenine_CS"/>
</dbReference>
<dbReference type="InterPro" id="IPR017237">
    <property type="entry name" value="rRNA_m2G-MeTrfase_RlmG"/>
</dbReference>
<dbReference type="InterPro" id="IPR046977">
    <property type="entry name" value="RsmC/RlmG"/>
</dbReference>
<dbReference type="InterPro" id="IPR029063">
    <property type="entry name" value="SAM-dependent_MTases_sf"/>
</dbReference>
<dbReference type="InterPro" id="IPR007848">
    <property type="entry name" value="Small_mtfrase_dom"/>
</dbReference>
<dbReference type="NCBIfam" id="NF011577">
    <property type="entry name" value="PRK15001.1"/>
    <property type="match status" value="1"/>
</dbReference>
<dbReference type="PANTHER" id="PTHR47816:SF5">
    <property type="entry name" value="RIBOSOMAL RNA LARGE SUBUNIT METHYLTRANSFERASE G"/>
    <property type="match status" value="1"/>
</dbReference>
<dbReference type="PANTHER" id="PTHR47816">
    <property type="entry name" value="RIBOSOMAL RNA SMALL SUBUNIT METHYLTRANSFERASE C"/>
    <property type="match status" value="1"/>
</dbReference>
<dbReference type="Pfam" id="PF05175">
    <property type="entry name" value="MTS"/>
    <property type="match status" value="1"/>
</dbReference>
<dbReference type="PIRSF" id="PIRSF037565">
    <property type="entry name" value="RRNA_m2G_Mtase_RsmD_prd"/>
    <property type="match status" value="1"/>
</dbReference>
<dbReference type="SUPFAM" id="SSF53335">
    <property type="entry name" value="S-adenosyl-L-methionine-dependent methyltransferases"/>
    <property type="match status" value="1"/>
</dbReference>
<protein>
    <recommendedName>
        <fullName evidence="1">Ribosomal RNA large subunit methyltransferase G</fullName>
        <ecNumber evidence="1">2.1.1.174</ecNumber>
    </recommendedName>
    <alternativeName>
        <fullName evidence="1">23S rRNA m2G1835 methyltransferase</fullName>
    </alternativeName>
    <alternativeName>
        <fullName evidence="1">rRNA (guanine-N(2)-)-methyltransferase RlmG</fullName>
    </alternativeName>
</protein>
<accession>A4THM8</accession>
<proteinExistence type="inferred from homology"/>
<reference key="1">
    <citation type="submission" date="2007-02" db="EMBL/GenBank/DDBJ databases">
        <title>Complete sequence of chromosome of Yersinia pestis Pestoides F.</title>
        <authorList>
            <consortium name="US DOE Joint Genome Institute"/>
            <person name="Copeland A."/>
            <person name="Lucas S."/>
            <person name="Lapidus A."/>
            <person name="Barry K."/>
            <person name="Detter J.C."/>
            <person name="Glavina del Rio T."/>
            <person name="Hammon N."/>
            <person name="Israni S."/>
            <person name="Dalin E."/>
            <person name="Tice H."/>
            <person name="Pitluck S."/>
            <person name="Di Bartolo G."/>
            <person name="Chain P."/>
            <person name="Malfatti S."/>
            <person name="Shin M."/>
            <person name="Vergez L."/>
            <person name="Schmutz J."/>
            <person name="Larimer F."/>
            <person name="Land M."/>
            <person name="Hauser L."/>
            <person name="Worsham P."/>
            <person name="Chu M."/>
            <person name="Bearden S."/>
            <person name="Garcia E."/>
            <person name="Richardson P."/>
        </authorList>
    </citation>
    <scope>NUCLEOTIDE SEQUENCE [LARGE SCALE GENOMIC DNA]</scope>
    <source>
        <strain>Pestoides F</strain>
    </source>
</reference>
<keyword id="KW-0963">Cytoplasm</keyword>
<keyword id="KW-0489">Methyltransferase</keyword>
<keyword id="KW-0698">rRNA processing</keyword>
<keyword id="KW-0949">S-adenosyl-L-methionine</keyword>
<keyword id="KW-0808">Transferase</keyword>
<feature type="chain" id="PRO_0000366540" description="Ribosomal RNA large subunit methyltransferase G">
    <location>
        <begin position="1"/>
        <end position="395"/>
    </location>
</feature>
<sequence>MSQLDLGTQSLELERFPPQENSNTLQAWEAADEYLLQNIDLSKIDGRPVLVFNDQFGTLACALHAYRPFSSSDSYMSQLATAHNLRLNHLDESAVTLLSSVDDLPEAPKLVVIKIPKALALLEHQLRALRRVVAPDTVIIAGAKSRDVHNSTLQLFEKILGPTKTTLAWKKARLIHCEVADIPLADAPETIDWPLPNTDYIIHNHANVFSRNNLDIGARFFMEILPYDVTGKIADLGCGNGVVGLIALEQNPLAEMLFVDESYMAVASSELNITVNRPQDLSRCEFMVSHGLAGVERESLQLVLCNPPFHQQHAVSDHVAWQMFCDAKRCLKAGGELMIVGNRHLDYFHKLKRLFGNCETLDSNQKFMVLKSVKQASSRSEGGGSGSLDMSYSDF</sequence>
<organism>
    <name type="scientific">Yersinia pestis (strain Pestoides F)</name>
    <dbReference type="NCBI Taxonomy" id="386656"/>
    <lineage>
        <taxon>Bacteria</taxon>
        <taxon>Pseudomonadati</taxon>
        <taxon>Pseudomonadota</taxon>
        <taxon>Gammaproteobacteria</taxon>
        <taxon>Enterobacterales</taxon>
        <taxon>Yersiniaceae</taxon>
        <taxon>Yersinia</taxon>
    </lineage>
</organism>
<evidence type="ECO:0000255" key="1">
    <source>
        <dbReference type="HAMAP-Rule" id="MF_01859"/>
    </source>
</evidence>
<gene>
    <name evidence="1" type="primary">rlmG</name>
    <name type="ordered locus">YPDSF_0375</name>
</gene>
<comment type="function">
    <text evidence="1">Specifically methylates the guanine in position 1835 (m2G1835) of 23S rRNA.</text>
</comment>
<comment type="catalytic activity">
    <reaction evidence="1">
        <text>guanosine(1835) in 23S rRNA + S-adenosyl-L-methionine = N(2)-methylguanosine(1835) in 23S rRNA + S-adenosyl-L-homocysteine + H(+)</text>
        <dbReference type="Rhea" id="RHEA:42744"/>
        <dbReference type="Rhea" id="RHEA-COMP:10217"/>
        <dbReference type="Rhea" id="RHEA-COMP:10218"/>
        <dbReference type="ChEBI" id="CHEBI:15378"/>
        <dbReference type="ChEBI" id="CHEBI:57856"/>
        <dbReference type="ChEBI" id="CHEBI:59789"/>
        <dbReference type="ChEBI" id="CHEBI:74269"/>
        <dbReference type="ChEBI" id="CHEBI:74481"/>
        <dbReference type="EC" id="2.1.1.174"/>
    </reaction>
</comment>
<comment type="subcellular location">
    <subcellularLocation>
        <location evidence="1">Cytoplasm</location>
    </subcellularLocation>
</comment>
<comment type="similarity">
    <text evidence="1">Belongs to the methyltransferase superfamily. RlmG family.</text>
</comment>